<protein>
    <recommendedName>
        <fullName>C5a anaphylatoxin chemotactic receptor 1</fullName>
    </recommendedName>
    <alternativeName>
        <fullName>C5a anaphylatoxin chemotactic receptor</fullName>
        <shortName>C5a-R</shortName>
        <shortName>C5aR</shortName>
    </alternativeName>
    <cdAntigenName>CD88</cdAntigenName>
</protein>
<reference key="1">
    <citation type="journal article" date="1996" name="Immunogenetics">
        <title>Molecular evolution of the N-formyl peptide and C5a receptors in non-human primates.</title>
        <authorList>
            <person name="Alvarez V."/>
            <person name="Coto E."/>
            <person name="Sehen F."/>
            <person name="Gouzalek-Koces S."/>
            <person name="Lopez-Larrea C."/>
        </authorList>
    </citation>
    <scope>NUCLEOTIDE SEQUENCE [GENOMIC DNA]</scope>
</reference>
<organism>
    <name type="scientific">Macaca mulatta</name>
    <name type="common">Rhesus macaque</name>
    <dbReference type="NCBI Taxonomy" id="9544"/>
    <lineage>
        <taxon>Eukaryota</taxon>
        <taxon>Metazoa</taxon>
        <taxon>Chordata</taxon>
        <taxon>Craniata</taxon>
        <taxon>Vertebrata</taxon>
        <taxon>Euteleostomi</taxon>
        <taxon>Mammalia</taxon>
        <taxon>Eutheria</taxon>
        <taxon>Euarchontoglires</taxon>
        <taxon>Primates</taxon>
        <taxon>Haplorrhini</taxon>
        <taxon>Catarrhini</taxon>
        <taxon>Cercopithecidae</taxon>
        <taxon>Cercopithecinae</taxon>
        <taxon>Macaca</taxon>
    </lineage>
</organism>
<comment type="function">
    <text evidence="1">Receptor for the chemotactic and inflammatory peptide anaphylatoxin C5a. The ligand interacts with at least two sites on the receptor: a high-affinity site on the extracellular N-terminus, and a second site in the transmembrane region which activates downstream signaling events. Receptor activation stimulates chemotaxis, granule enzyme release, intracellular calcium release and superoxide anion production.</text>
</comment>
<comment type="subunit">
    <text evidence="1">Homodimer. May also form higher-order oligomers. Interacts (when phosphorylated) with ARRB1 and ARRB2; the interaction is associated with internalization of C5aR. Interacts (via N-terminal domain) with S.aureus chemotaxis inhibitory protein (CHIPS); the interaction blocks the receptor and may thus inhibit the immune response.</text>
</comment>
<comment type="subcellular location">
    <subcellularLocation>
        <location evidence="1">Cell membrane</location>
        <topology evidence="1">Multi-pass membrane protein</topology>
    </subcellularLocation>
    <subcellularLocation>
        <location evidence="1">Cytoplasmic vesicle</location>
    </subcellularLocation>
    <text evidence="1">Phosphorylated C5aR colocalizes with ARRB1 and ARRB2 in cytoplasmic vesicles.</text>
</comment>
<comment type="PTM">
    <text evidence="1">Sulfation plays a critical role in the association of C5aR with C5a, but no significant role in the ability of the receptor to transduce a signal and mobilize calcium in response to a small peptide agonist. Sulfation at Tyr-7 is important for CHIPS binding.</text>
</comment>
<comment type="PTM">
    <text evidence="1">Phosphorylated on serine residues in response to C5a binding, resulting in internalization of the receptor and short-term desensitization to C5a.</text>
</comment>
<comment type="similarity">
    <text evidence="2">Belongs to the G-protein coupled receptor 1 family.</text>
</comment>
<name>C5AR1_MACMU</name>
<feature type="chain" id="PRO_0000069210" description="C5a anaphylatoxin chemotactic receptor 1">
    <location>
        <begin position="1" status="less than"/>
        <end position="340" status="greater than"/>
    </location>
</feature>
<feature type="topological domain" description="Extracellular" evidence="3">
    <location>
        <begin position="1" status="less than"/>
        <end position="30"/>
    </location>
</feature>
<feature type="transmembrane region" description="Helical; Name=1" evidence="1">
    <location>
        <begin position="31"/>
        <end position="57"/>
    </location>
</feature>
<feature type="topological domain" description="Cytoplasmic" evidence="3">
    <location>
        <begin position="58"/>
        <end position="62"/>
    </location>
</feature>
<feature type="transmembrane region" description="Helical; Name=2" evidence="1">
    <location>
        <begin position="63"/>
        <end position="86"/>
    </location>
</feature>
<feature type="topological domain" description="Extracellular" evidence="3">
    <location>
        <begin position="87"/>
        <end position="103"/>
    </location>
</feature>
<feature type="transmembrane region" description="Helical; Name=3" evidence="1">
    <location>
        <begin position="104"/>
        <end position="125"/>
    </location>
</feature>
<feature type="topological domain" description="Cytoplasmic" evidence="3">
    <location>
        <begin position="126"/>
        <end position="146"/>
    </location>
</feature>
<feature type="transmembrane region" description="Helical; Name=4" evidence="1">
    <location>
        <begin position="147"/>
        <end position="167"/>
    </location>
</feature>
<feature type="topological domain" description="Extracellular" evidence="3">
    <location>
        <begin position="168"/>
        <end position="193"/>
    </location>
</feature>
<feature type="transmembrane region" description="Helical; Name=5" evidence="1">
    <location>
        <begin position="194"/>
        <end position="219"/>
    </location>
</feature>
<feature type="topological domain" description="Cytoplasmic" evidence="3">
    <location>
        <begin position="220"/>
        <end position="235"/>
    </location>
</feature>
<feature type="transmembrane region" description="Helical; Name=6" evidence="1">
    <location>
        <begin position="236"/>
        <end position="258"/>
    </location>
</feature>
<feature type="topological domain" description="Extracellular" evidence="3">
    <location>
        <begin position="259"/>
        <end position="275"/>
    </location>
</feature>
<feature type="transmembrane region" description="Helical; Name=7" evidence="1">
    <location>
        <begin position="276"/>
        <end position="296"/>
    </location>
</feature>
<feature type="topological domain" description="Cytoplasmic" evidence="3">
    <location>
        <begin position="297"/>
        <end position="340" status="greater than"/>
    </location>
</feature>
<feature type="region of interest" description="Required for CHIPS binding" evidence="1">
    <location>
        <begin position="3"/>
        <end position="11"/>
    </location>
</feature>
<feature type="region of interest" description="Involved in C5a binding" evidence="1">
    <location>
        <begin position="14"/>
        <end position="23"/>
    </location>
</feature>
<feature type="modified residue" description="Sulfotyrosine" evidence="1">
    <location>
        <position position="4"/>
    </location>
</feature>
<feature type="modified residue" description="Sulfotyrosine" evidence="1">
    <location>
        <position position="7"/>
    </location>
</feature>
<feature type="modified residue" description="Phosphoserine" evidence="1">
    <location>
        <position position="307"/>
    </location>
</feature>
<feature type="modified residue" description="Phosphoserine" evidence="1">
    <location>
        <position position="310"/>
    </location>
</feature>
<feature type="modified residue" description="Phosphoserine" evidence="1">
    <location>
        <position position="320"/>
    </location>
</feature>
<feature type="modified residue" description="Phosphoserine" evidence="1">
    <location>
        <position position="325"/>
    </location>
</feature>
<feature type="modified residue" description="Phosphoserine" evidence="1">
    <location>
        <position position="327"/>
    </location>
</feature>
<feature type="modified residue" description="Phosphoserine" evidence="1">
    <location>
        <position position="331"/>
    </location>
</feature>
<feature type="disulfide bond" evidence="2">
    <location>
        <begin position="102"/>
        <end position="181"/>
    </location>
</feature>
<feature type="non-terminal residue">
    <location>
        <position position="1"/>
    </location>
</feature>
<feature type="non-terminal residue">
    <location>
        <position position="340"/>
    </location>
</feature>
<sequence length="340" mass="38274">TPDYGHYDDKDTLDANTPVDKTSNTLRVPDILALVIFAVVFLVGVLRNALVVWVTAFEAKRTINAIWFLNLAVADFLSCLALPILFTSIVQHHHWPFGGAACRILPSLILLNMYASILLLATISADRFLLVFNPIWCQNFRGAGLAWIACAVAWGLALLLTIPSFLYRVVREEYFPPKVLCGVDHGHDKRRERAVAIARLVLGFVWPLLTLTMCYTFLLLRTWSRRATRSTKTLKVVVAVVASFFIFWLPYQVTGMMMSFLEPSSPTFLLLKKLDSLCISFAYINCCINPIIYVVAGQGFQGRLRKSLPSLLRNVLTEESMVRESKSFTRSTVDTMAQKT</sequence>
<keyword id="KW-1003">Cell membrane</keyword>
<keyword id="KW-0145">Chemotaxis</keyword>
<keyword id="KW-0968">Cytoplasmic vesicle</keyword>
<keyword id="KW-1015">Disulfide bond</keyword>
<keyword id="KW-0297">G-protein coupled receptor</keyword>
<keyword id="KW-0472">Membrane</keyword>
<keyword id="KW-0597">Phosphoprotein</keyword>
<keyword id="KW-0675">Receptor</keyword>
<keyword id="KW-1185">Reference proteome</keyword>
<keyword id="KW-0765">Sulfation</keyword>
<keyword id="KW-0807">Transducer</keyword>
<keyword id="KW-0812">Transmembrane</keyword>
<keyword id="KW-1133">Transmembrane helix</keyword>
<gene>
    <name type="primary">C5AR1</name>
    <name type="synonym">C5AR</name>
    <name type="synonym">C5R1</name>
</gene>
<evidence type="ECO:0000250" key="1">
    <source>
        <dbReference type="UniProtKB" id="P21730"/>
    </source>
</evidence>
<evidence type="ECO:0000255" key="2">
    <source>
        <dbReference type="PROSITE-ProRule" id="PRU00521"/>
    </source>
</evidence>
<evidence type="ECO:0000305" key="3"/>
<proteinExistence type="inferred from homology"/>
<dbReference type="EMBL" id="X97731">
    <property type="protein sequence ID" value="CAA66315.1"/>
    <property type="molecule type" value="Genomic_DNA"/>
</dbReference>
<dbReference type="SMR" id="P79188"/>
<dbReference type="FunCoup" id="P79188">
    <property type="interactions" value="732"/>
</dbReference>
<dbReference type="STRING" id="9544.ENSMMUP00000064142"/>
<dbReference type="PaxDb" id="9544-ENSMMUP00000012156"/>
<dbReference type="eggNOG" id="ENOG502R35Z">
    <property type="taxonomic scope" value="Eukaryota"/>
</dbReference>
<dbReference type="InParanoid" id="P79188"/>
<dbReference type="Proteomes" id="UP000006718">
    <property type="component" value="Unassembled WGS sequence"/>
</dbReference>
<dbReference type="GO" id="GO:0045177">
    <property type="term" value="C:apical part of cell"/>
    <property type="evidence" value="ECO:0000250"/>
    <property type="project" value="UniProtKB"/>
</dbReference>
<dbReference type="GO" id="GO:0016323">
    <property type="term" value="C:basolateral plasma membrane"/>
    <property type="evidence" value="ECO:0000250"/>
    <property type="project" value="UniProtKB"/>
</dbReference>
<dbReference type="GO" id="GO:0031410">
    <property type="term" value="C:cytoplasmic vesicle"/>
    <property type="evidence" value="ECO:0007669"/>
    <property type="project" value="UniProtKB-KW"/>
</dbReference>
<dbReference type="GO" id="GO:0005886">
    <property type="term" value="C:plasma membrane"/>
    <property type="evidence" value="ECO:0000318"/>
    <property type="project" value="GO_Central"/>
</dbReference>
<dbReference type="GO" id="GO:0004878">
    <property type="term" value="F:complement component C5a receptor activity"/>
    <property type="evidence" value="ECO:0000250"/>
    <property type="project" value="UniProtKB"/>
</dbReference>
<dbReference type="GO" id="GO:0004930">
    <property type="term" value="F:G protein-coupled receptor activity"/>
    <property type="evidence" value="ECO:0000318"/>
    <property type="project" value="GO_Central"/>
</dbReference>
<dbReference type="GO" id="GO:0006935">
    <property type="term" value="P:chemotaxis"/>
    <property type="evidence" value="ECO:0007669"/>
    <property type="project" value="UniProtKB-KW"/>
</dbReference>
<dbReference type="GO" id="GO:0002430">
    <property type="term" value="P:complement receptor mediated signaling pathway"/>
    <property type="evidence" value="ECO:0000318"/>
    <property type="project" value="GO_Central"/>
</dbReference>
<dbReference type="GO" id="GO:0006954">
    <property type="term" value="P:inflammatory response"/>
    <property type="evidence" value="ECO:0000318"/>
    <property type="project" value="GO_Central"/>
</dbReference>
<dbReference type="GO" id="GO:0042789">
    <property type="term" value="P:mRNA transcription by RNA polymerase II"/>
    <property type="evidence" value="ECO:0000250"/>
    <property type="project" value="UniProtKB"/>
</dbReference>
<dbReference type="GO" id="GO:0007200">
    <property type="term" value="P:phospholipase C-activating G protein-coupled receptor signaling pathway"/>
    <property type="evidence" value="ECO:0000318"/>
    <property type="project" value="GO_Central"/>
</dbReference>
<dbReference type="GO" id="GO:0007204">
    <property type="term" value="P:positive regulation of cytosolic calcium ion concentration"/>
    <property type="evidence" value="ECO:0000318"/>
    <property type="project" value="GO_Central"/>
</dbReference>
<dbReference type="GO" id="GO:0050679">
    <property type="term" value="P:positive regulation of epithelial cell proliferation"/>
    <property type="evidence" value="ECO:0000250"/>
    <property type="project" value="UniProtKB"/>
</dbReference>
<dbReference type="GO" id="GO:0070374">
    <property type="term" value="P:positive regulation of ERK1 and ERK2 cascade"/>
    <property type="evidence" value="ECO:0000250"/>
    <property type="project" value="UniProtKB"/>
</dbReference>
<dbReference type="CDD" id="cd15114">
    <property type="entry name" value="7tmA_C5aR"/>
    <property type="match status" value="1"/>
</dbReference>
<dbReference type="FunFam" id="1.20.1070.10:FF:000034">
    <property type="entry name" value="G-protein coupled receptor 1"/>
    <property type="match status" value="1"/>
</dbReference>
<dbReference type="Gene3D" id="1.20.1070.10">
    <property type="entry name" value="Rhodopsin 7-helix transmembrane proteins"/>
    <property type="match status" value="1"/>
</dbReference>
<dbReference type="InterPro" id="IPR002234">
    <property type="entry name" value="Anphylx_rcpt_C3a/C5a1-2"/>
</dbReference>
<dbReference type="InterPro" id="IPR000826">
    <property type="entry name" value="Formyl_rcpt-rel"/>
</dbReference>
<dbReference type="InterPro" id="IPR000276">
    <property type="entry name" value="GPCR_Rhodpsn"/>
</dbReference>
<dbReference type="InterPro" id="IPR017452">
    <property type="entry name" value="GPCR_Rhodpsn_7TM"/>
</dbReference>
<dbReference type="PANTHER" id="PTHR24225:SF29">
    <property type="entry name" value="C5A ANAPHYLATOXIN CHEMOTACTIC RECEPTOR 1"/>
    <property type="match status" value="1"/>
</dbReference>
<dbReference type="PANTHER" id="PTHR24225">
    <property type="entry name" value="CHEMOTACTIC RECEPTOR"/>
    <property type="match status" value="1"/>
</dbReference>
<dbReference type="Pfam" id="PF00001">
    <property type="entry name" value="7tm_1"/>
    <property type="match status" value="1"/>
</dbReference>
<dbReference type="PRINTS" id="PR01104">
    <property type="entry name" value="ANPHYLATOXNR"/>
</dbReference>
<dbReference type="PRINTS" id="PR00426">
    <property type="entry name" value="C5ANPHYLTXNR"/>
</dbReference>
<dbReference type="PRINTS" id="PR00237">
    <property type="entry name" value="GPCRRHODOPSN"/>
</dbReference>
<dbReference type="SUPFAM" id="SSF81321">
    <property type="entry name" value="Family A G protein-coupled receptor-like"/>
    <property type="match status" value="1"/>
</dbReference>
<dbReference type="PROSITE" id="PS00237">
    <property type="entry name" value="G_PROTEIN_RECEP_F1_1"/>
    <property type="match status" value="1"/>
</dbReference>
<dbReference type="PROSITE" id="PS50262">
    <property type="entry name" value="G_PROTEIN_RECEP_F1_2"/>
    <property type="match status" value="1"/>
</dbReference>
<accession>P79188</accession>